<evidence type="ECO:0000255" key="1">
    <source>
        <dbReference type="HAMAP-Rule" id="MF_00251"/>
    </source>
</evidence>
<evidence type="ECO:0000305" key="2"/>
<name>RL36_SULSY</name>
<feature type="chain" id="PRO_1000101077" description="Large ribosomal subunit protein bL36">
    <location>
        <begin position="1"/>
        <end position="37"/>
    </location>
</feature>
<accession>B2V7I9</accession>
<keyword id="KW-0687">Ribonucleoprotein</keyword>
<keyword id="KW-0689">Ribosomal protein</keyword>
<proteinExistence type="inferred from homology"/>
<gene>
    <name evidence="1" type="primary">rpmJ</name>
    <name type="ordered locus">SYO3AOP1_0267</name>
</gene>
<reference key="1">
    <citation type="journal article" date="2009" name="J. Bacteriol.">
        <title>Complete and draft genome sequences of six members of the Aquificales.</title>
        <authorList>
            <person name="Reysenbach A.-L."/>
            <person name="Hamamura N."/>
            <person name="Podar M."/>
            <person name="Griffiths E."/>
            <person name="Ferreira S."/>
            <person name="Hochstein R."/>
            <person name="Heidelberg J."/>
            <person name="Johnson J."/>
            <person name="Mead D."/>
            <person name="Pohorille A."/>
            <person name="Sarmiento M."/>
            <person name="Schweighofer K."/>
            <person name="Seshadri R."/>
            <person name="Voytek M.A."/>
        </authorList>
    </citation>
    <scope>NUCLEOTIDE SEQUENCE [LARGE SCALE GENOMIC DNA]</scope>
    <source>
        <strain>YO3AOP1</strain>
    </source>
</reference>
<comment type="similarity">
    <text evidence="1">Belongs to the bacterial ribosomal protein bL36 family.</text>
</comment>
<sequence>MKIKASVKPRCEKCRIIRRNGRVMVICENPKHKQKQG</sequence>
<organism>
    <name type="scientific">Sulfurihydrogenibium sp. (strain YO3AOP1)</name>
    <dbReference type="NCBI Taxonomy" id="436114"/>
    <lineage>
        <taxon>Bacteria</taxon>
        <taxon>Pseudomonadati</taxon>
        <taxon>Aquificota</taxon>
        <taxon>Aquificia</taxon>
        <taxon>Aquificales</taxon>
        <taxon>Hydrogenothermaceae</taxon>
        <taxon>Sulfurihydrogenibium</taxon>
    </lineage>
</organism>
<protein>
    <recommendedName>
        <fullName evidence="1">Large ribosomal subunit protein bL36</fullName>
    </recommendedName>
    <alternativeName>
        <fullName evidence="2">50S ribosomal protein L36</fullName>
    </alternativeName>
</protein>
<dbReference type="EMBL" id="CP001080">
    <property type="protein sequence ID" value="ACD65912.1"/>
    <property type="molecule type" value="Genomic_DNA"/>
</dbReference>
<dbReference type="RefSeq" id="WP_012459001.1">
    <property type="nucleotide sequence ID" value="NC_010730.1"/>
</dbReference>
<dbReference type="SMR" id="B2V7I9"/>
<dbReference type="STRING" id="436114.SYO3AOP1_0267"/>
<dbReference type="KEGG" id="sul:SYO3AOP1_0267"/>
<dbReference type="eggNOG" id="COG0257">
    <property type="taxonomic scope" value="Bacteria"/>
</dbReference>
<dbReference type="HOGENOM" id="CLU_135723_6_2_0"/>
<dbReference type="GO" id="GO:0005737">
    <property type="term" value="C:cytoplasm"/>
    <property type="evidence" value="ECO:0007669"/>
    <property type="project" value="UniProtKB-ARBA"/>
</dbReference>
<dbReference type="GO" id="GO:1990904">
    <property type="term" value="C:ribonucleoprotein complex"/>
    <property type="evidence" value="ECO:0007669"/>
    <property type="project" value="UniProtKB-KW"/>
</dbReference>
<dbReference type="GO" id="GO:0005840">
    <property type="term" value="C:ribosome"/>
    <property type="evidence" value="ECO:0007669"/>
    <property type="project" value="UniProtKB-KW"/>
</dbReference>
<dbReference type="GO" id="GO:0003735">
    <property type="term" value="F:structural constituent of ribosome"/>
    <property type="evidence" value="ECO:0007669"/>
    <property type="project" value="InterPro"/>
</dbReference>
<dbReference type="GO" id="GO:0006412">
    <property type="term" value="P:translation"/>
    <property type="evidence" value="ECO:0007669"/>
    <property type="project" value="UniProtKB-UniRule"/>
</dbReference>
<dbReference type="HAMAP" id="MF_00251">
    <property type="entry name" value="Ribosomal_bL36"/>
    <property type="match status" value="1"/>
</dbReference>
<dbReference type="InterPro" id="IPR000473">
    <property type="entry name" value="Ribosomal_bL36"/>
</dbReference>
<dbReference type="InterPro" id="IPR035977">
    <property type="entry name" value="Ribosomal_bL36_sp"/>
</dbReference>
<dbReference type="NCBIfam" id="TIGR01022">
    <property type="entry name" value="rpmJ_bact"/>
    <property type="match status" value="1"/>
</dbReference>
<dbReference type="PANTHER" id="PTHR42888">
    <property type="entry name" value="50S RIBOSOMAL PROTEIN L36, CHLOROPLASTIC"/>
    <property type="match status" value="1"/>
</dbReference>
<dbReference type="PANTHER" id="PTHR42888:SF1">
    <property type="entry name" value="LARGE RIBOSOMAL SUBUNIT PROTEIN BL36C"/>
    <property type="match status" value="1"/>
</dbReference>
<dbReference type="Pfam" id="PF00444">
    <property type="entry name" value="Ribosomal_L36"/>
    <property type="match status" value="1"/>
</dbReference>
<dbReference type="SUPFAM" id="SSF57840">
    <property type="entry name" value="Ribosomal protein L36"/>
    <property type="match status" value="1"/>
</dbReference>
<dbReference type="PROSITE" id="PS00828">
    <property type="entry name" value="RIBOSOMAL_L36"/>
    <property type="match status" value="1"/>
</dbReference>